<accession>K7WRE1</accession>
<accession>K7X473</accession>
<reference evidence="9 10" key="1">
    <citation type="journal article" date="2012" name="Int. J. Ind. Entomol.">
        <title>Molecular cloning and characterization of chymotrypsin inhibitor and chitin-binding protein homologue from the bumblebee Bombus terrestris.</title>
        <authorList>
            <person name="Qiu Y."/>
            <person name="Yoon H.J."/>
            <person name="Jin B.R."/>
        </authorList>
    </citation>
    <scope>NUCLEOTIDE SEQUENCE [GENOMIC DNA / MRNA]</scope>
    <scope>TISSUE SPECIFICITY</scope>
    <scope>RECOMBINANT EXPRESSION</scope>
    <source>
        <tissue>Venom gland</tissue>
    </source>
</reference>
<dbReference type="EMBL" id="JX667784">
    <property type="protein sequence ID" value="AFX62368.1"/>
    <property type="molecule type" value="mRNA"/>
</dbReference>
<dbReference type="EMBL" id="JX667785">
    <property type="protein sequence ID" value="AFX62369.1"/>
    <property type="molecule type" value="Genomic_DNA"/>
</dbReference>
<dbReference type="RefSeq" id="XP_003401252.1">
    <property type="nucleotide sequence ID" value="XM_003401204.4"/>
</dbReference>
<dbReference type="EnsemblMetazoa" id="XM_003401204.3">
    <property type="protein sequence ID" value="XP_003401252.1"/>
    <property type="gene ID" value="LOC100645263"/>
</dbReference>
<dbReference type="GeneID" id="100645263"/>
<dbReference type="KEGG" id="bter:100645263"/>
<dbReference type="OrthoDB" id="6236007at2759"/>
<dbReference type="Proteomes" id="UP000835206">
    <property type="component" value="Chromosome 15"/>
</dbReference>
<dbReference type="GO" id="GO:0030414">
    <property type="term" value="F:peptidase inhibitor activity"/>
    <property type="evidence" value="ECO:0007669"/>
    <property type="project" value="UniProtKB-KW"/>
</dbReference>
<dbReference type="CDD" id="cd19941">
    <property type="entry name" value="TIL"/>
    <property type="match status" value="1"/>
</dbReference>
<dbReference type="Gene3D" id="2.10.25.10">
    <property type="entry name" value="Laminin"/>
    <property type="match status" value="1"/>
</dbReference>
<dbReference type="InterPro" id="IPR036084">
    <property type="entry name" value="Ser_inhib-like_sf"/>
</dbReference>
<dbReference type="InterPro" id="IPR051368">
    <property type="entry name" value="SerProtInhib-TIL_Domain"/>
</dbReference>
<dbReference type="InterPro" id="IPR002919">
    <property type="entry name" value="TIL_dom"/>
</dbReference>
<dbReference type="PANTHER" id="PTHR23259:SF70">
    <property type="entry name" value="ACCESSORY GLAND PROTEIN ACP62F-RELATED"/>
    <property type="match status" value="1"/>
</dbReference>
<dbReference type="PANTHER" id="PTHR23259">
    <property type="entry name" value="RIDDLE"/>
    <property type="match status" value="1"/>
</dbReference>
<dbReference type="Pfam" id="PF01826">
    <property type="entry name" value="TIL"/>
    <property type="match status" value="1"/>
</dbReference>
<dbReference type="SUPFAM" id="SSF57567">
    <property type="entry name" value="Serine protease inhibitors"/>
    <property type="match status" value="1"/>
</dbReference>
<name>TIL_BOMTE</name>
<proteinExistence type="evidence at transcript level"/>
<comment type="function">
    <text evidence="3">Antimicrobial venom serine protease inhibitor. Exhibits inhibitory activity against chymotrypsin (IC(50)=19.56 nM, Ki=15.24 nM) and microbial serine proteases, such as subtilisin A (IC(50)=6.57 nM, Ki=6.83 nM) and proteinase K (IC(50)=7.11 nM, Ki=7.02 nM). Has not activity against trypsin, plasmin, tPA, thrombin, factor Xa or elastase. Binds and inhibits Gram-positive bacteria (B.subtilis (MIC=29.45 uM), B.thuringiensis (MIC=91.03 uM)) and the entomopathogenic fungus B.bassiana (MIC=30.09 uM) but not to E.coli.</text>
</comment>
<comment type="subcellular location">
    <subcellularLocation>
        <location evidence="8">Secreted</location>
    </subcellularLocation>
    <subcellularLocation>
        <location evidence="3">Target cell membrane</location>
    </subcellularLocation>
</comment>
<comment type="tissue specificity">
    <text evidence="5">Expressed in the venom gland and fat body.</text>
</comment>
<comment type="PTM">
    <text evidence="5">May be O-glycosylated.</text>
</comment>
<comment type="similarity">
    <text evidence="7">Belongs to the serine protease inhibitor-like (TIL domain-containing) family.</text>
</comment>
<feature type="signal peptide" evidence="4">
    <location>
        <begin position="1"/>
        <end position="20"/>
    </location>
</feature>
<feature type="chain" id="PRO_5043306805" description="Chymotrypsin inhibitor" evidence="8">
    <location>
        <begin position="21"/>
        <end position="75"/>
    </location>
</feature>
<feature type="domain" description="TIL" evidence="4">
    <location>
        <begin position="23"/>
        <end position="75"/>
    </location>
</feature>
<feature type="site" description="Reactive bond" evidence="1">
    <location>
        <begin position="49"/>
        <end position="50"/>
    </location>
</feature>
<feature type="disulfide bond" evidence="2">
    <location>
        <begin position="23"/>
        <end position="55"/>
    </location>
</feature>
<feature type="disulfide bond" evidence="2">
    <location>
        <begin position="32"/>
        <end position="51"/>
    </location>
</feature>
<feature type="disulfide bond" evidence="2">
    <location>
        <begin position="35"/>
        <end position="47"/>
    </location>
</feature>
<feature type="disulfide bond" evidence="2">
    <location>
        <begin position="39"/>
        <end position="75"/>
    </location>
</feature>
<feature type="disulfide bond" evidence="2">
    <location>
        <begin position="57"/>
        <end position="69"/>
    </location>
</feature>
<feature type="sequence variant" evidence="8">
    <original>G</original>
    <variation>E</variation>
    <location>
        <position position="60"/>
    </location>
</feature>
<protein>
    <recommendedName>
        <fullName evidence="6">Chymotrypsin inhibitor</fullName>
        <shortName evidence="6">CI</shortName>
    </recommendedName>
</protein>
<organism>
    <name type="scientific">Bombus terrestris</name>
    <name type="common">Buff-tailed bumblebee</name>
    <name type="synonym">Apis terrestris</name>
    <dbReference type="NCBI Taxonomy" id="30195"/>
    <lineage>
        <taxon>Eukaryota</taxon>
        <taxon>Metazoa</taxon>
        <taxon>Ecdysozoa</taxon>
        <taxon>Arthropoda</taxon>
        <taxon>Hexapoda</taxon>
        <taxon>Insecta</taxon>
        <taxon>Pterygota</taxon>
        <taxon>Neoptera</taxon>
        <taxon>Endopterygota</taxon>
        <taxon>Hymenoptera</taxon>
        <taxon>Apocrita</taxon>
        <taxon>Aculeata</taxon>
        <taxon>Apoidea</taxon>
        <taxon>Anthophila</taxon>
        <taxon>Apidae</taxon>
        <taxon>Bombus</taxon>
        <taxon>Bombus</taxon>
    </lineage>
</organism>
<keyword id="KW-0044">Antibiotic</keyword>
<keyword id="KW-0929">Antimicrobial</keyword>
<keyword id="KW-1015">Disulfide bond</keyword>
<keyword id="KW-0295">Fungicide</keyword>
<keyword id="KW-0472">Membrane</keyword>
<keyword id="KW-0646">Protease inhibitor</keyword>
<keyword id="KW-0964">Secreted</keyword>
<keyword id="KW-0722">Serine protease inhibitor</keyword>
<keyword id="KW-0732">Signal</keyword>
<keyword id="KW-1052">Target cell membrane</keyword>
<keyword id="KW-1053">Target membrane</keyword>
<evidence type="ECO:0000250" key="1">
    <source>
        <dbReference type="UniProtKB" id="A0A2R4SV19"/>
    </source>
</evidence>
<evidence type="ECO:0000250" key="2">
    <source>
        <dbReference type="UniProtKB" id="P07851"/>
    </source>
</evidence>
<evidence type="ECO:0000250" key="3">
    <source>
        <dbReference type="UniProtKB" id="U5T7E4"/>
    </source>
</evidence>
<evidence type="ECO:0000255" key="4"/>
<evidence type="ECO:0000269" key="5">
    <source ref="1"/>
</evidence>
<evidence type="ECO:0000303" key="6">
    <source ref="1"/>
</evidence>
<evidence type="ECO:0000305" key="7"/>
<evidence type="ECO:0000305" key="8">
    <source ref="1"/>
</evidence>
<evidence type="ECO:0000312" key="9">
    <source>
        <dbReference type="EMBL" id="AFX62368.1"/>
    </source>
</evidence>
<evidence type="ECO:0000312" key="10">
    <source>
        <dbReference type="EMBL" id="AFX62369.1"/>
    </source>
</evidence>
<sequence length="75" mass="8186">MSRILFVFLAVMAIFSTSFGQQCGLNEEFKSCGSCEPTCAKPRVTICTMECKIGCQCKSGYLRNGEGTCVLPEKC</sequence>